<accession>Q5XAN0</accession>
<dbReference type="EMBL" id="CP000003">
    <property type="protein sequence ID" value="AAT87533.1"/>
    <property type="molecule type" value="Genomic_DNA"/>
</dbReference>
<dbReference type="RefSeq" id="WP_002983626.1">
    <property type="nucleotide sequence ID" value="NC_006086.1"/>
</dbReference>
<dbReference type="SMR" id="Q5XAN0"/>
<dbReference type="GeneID" id="69900485"/>
<dbReference type="KEGG" id="spa:M6_Spy1398"/>
<dbReference type="HOGENOM" id="CLU_140309_1_0_9"/>
<dbReference type="Proteomes" id="UP000001167">
    <property type="component" value="Chromosome"/>
</dbReference>
<dbReference type="GO" id="GO:0005737">
    <property type="term" value="C:cytoplasm"/>
    <property type="evidence" value="ECO:0007669"/>
    <property type="project" value="UniProtKB-SubCell"/>
</dbReference>
<dbReference type="GO" id="GO:0051301">
    <property type="term" value="P:cell division"/>
    <property type="evidence" value="ECO:0007669"/>
    <property type="project" value="UniProtKB-UniRule"/>
</dbReference>
<dbReference type="GO" id="GO:0008360">
    <property type="term" value="P:regulation of cell shape"/>
    <property type="evidence" value="ECO:0007669"/>
    <property type="project" value="UniProtKB-UniRule"/>
</dbReference>
<dbReference type="Gene3D" id="6.10.250.660">
    <property type="match status" value="1"/>
</dbReference>
<dbReference type="HAMAP" id="MF_02011">
    <property type="entry name" value="GpsB"/>
    <property type="match status" value="1"/>
</dbReference>
<dbReference type="InterPro" id="IPR011229">
    <property type="entry name" value="Cell_cycle_GpsB"/>
</dbReference>
<dbReference type="InterPro" id="IPR019933">
    <property type="entry name" value="DivIVA_domain"/>
</dbReference>
<dbReference type="InterPro" id="IPR007793">
    <property type="entry name" value="DivIVA_fam"/>
</dbReference>
<dbReference type="NCBIfam" id="TIGR03544">
    <property type="entry name" value="DivI1A_domain"/>
    <property type="match status" value="1"/>
</dbReference>
<dbReference type="NCBIfam" id="NF010725">
    <property type="entry name" value="PRK14127.1"/>
    <property type="match status" value="1"/>
</dbReference>
<dbReference type="PANTHER" id="PTHR35794:SF1">
    <property type="entry name" value="CELL CYCLE PROTEIN GPSB"/>
    <property type="match status" value="1"/>
</dbReference>
<dbReference type="PANTHER" id="PTHR35794">
    <property type="entry name" value="CELL DIVISION PROTEIN DIVIVA"/>
    <property type="match status" value="1"/>
</dbReference>
<dbReference type="Pfam" id="PF05103">
    <property type="entry name" value="DivIVA"/>
    <property type="match status" value="1"/>
</dbReference>
<dbReference type="PIRSF" id="PIRSF029938">
    <property type="entry name" value="UCP029938"/>
    <property type="match status" value="1"/>
</dbReference>
<protein>
    <recommendedName>
        <fullName evidence="1">Cell cycle protein GpsB</fullName>
    </recommendedName>
    <alternativeName>
        <fullName evidence="1">Guiding PBP1-shuttling protein</fullName>
    </alternativeName>
</protein>
<name>GPSB_STRP6</name>
<proteinExistence type="inferred from homology"/>
<comment type="function">
    <text evidence="1">Divisome component that associates with the complex late in its assembly, after the Z-ring is formed, and is dependent on DivIC and PBP2B for its recruitment to the divisome. Together with EzrA, is a key component of the system that regulates PBP1 localization during cell cycle progression. Its main role could be the removal of PBP1 from the cell pole after pole maturation is completed. Also contributes to the recruitment of PBP1 to the division complex. Not essential for septum formation.</text>
</comment>
<comment type="subunit">
    <text evidence="1">Forms polymers through the coiled coil domains. Interacts with PBP1, MreC and EzrA.</text>
</comment>
<comment type="subcellular location">
    <subcellularLocation>
        <location evidence="1">Cytoplasm</location>
    </subcellularLocation>
    <text evidence="1">Shuttles between the lateral wall and the division site in a cell cycle-dependent manner.</text>
</comment>
<comment type="similarity">
    <text evidence="1">Belongs to the GpsB family.</text>
</comment>
<organism>
    <name type="scientific">Streptococcus pyogenes serotype M6 (strain ATCC BAA-946 / MGAS10394)</name>
    <dbReference type="NCBI Taxonomy" id="286636"/>
    <lineage>
        <taxon>Bacteria</taxon>
        <taxon>Bacillati</taxon>
        <taxon>Bacillota</taxon>
        <taxon>Bacilli</taxon>
        <taxon>Lactobacillales</taxon>
        <taxon>Streptococcaceae</taxon>
        <taxon>Streptococcus</taxon>
    </lineage>
</organism>
<keyword id="KW-0131">Cell cycle</keyword>
<keyword id="KW-0132">Cell division</keyword>
<keyword id="KW-0133">Cell shape</keyword>
<keyword id="KW-0175">Coiled coil</keyword>
<keyword id="KW-0963">Cytoplasm</keyword>
<sequence length="108" mass="12445">MTSIIYSPKDIFEQEFKTSMRGFDKKEVDEFLDNVIKDYENFNAQIEALKAENEALKKAKFQARNTVSATVQQPVPQPTRVAQSATNFDILKRISKLEKEVFGKQIIE</sequence>
<gene>
    <name evidence="1" type="primary">gpsB</name>
    <name type="ordered locus">M6_Spy1398</name>
</gene>
<feature type="chain" id="PRO_0000337965" description="Cell cycle protein GpsB">
    <location>
        <begin position="1"/>
        <end position="108"/>
    </location>
</feature>
<feature type="coiled-coil region" evidence="1">
    <location>
        <begin position="32"/>
        <end position="69"/>
    </location>
</feature>
<evidence type="ECO:0000255" key="1">
    <source>
        <dbReference type="HAMAP-Rule" id="MF_02011"/>
    </source>
</evidence>
<reference key="1">
    <citation type="journal article" date="2004" name="J. Infect. Dis.">
        <title>Progress toward characterization of the group A Streptococcus metagenome: complete genome sequence of a macrolide-resistant serotype M6 strain.</title>
        <authorList>
            <person name="Banks D.J."/>
            <person name="Porcella S.F."/>
            <person name="Barbian K.D."/>
            <person name="Beres S.B."/>
            <person name="Philips L.E."/>
            <person name="Voyich J.M."/>
            <person name="DeLeo F.R."/>
            <person name="Martin J.M."/>
            <person name="Somerville G.A."/>
            <person name="Musser J.M."/>
        </authorList>
    </citation>
    <scope>NUCLEOTIDE SEQUENCE [LARGE SCALE GENOMIC DNA]</scope>
    <source>
        <strain>ATCC BAA-946 / MGAS10394</strain>
    </source>
</reference>